<organism>
    <name type="scientific">Schizosaccharomyces pombe (strain 972 / ATCC 24843)</name>
    <name type="common">Fission yeast</name>
    <dbReference type="NCBI Taxonomy" id="284812"/>
    <lineage>
        <taxon>Eukaryota</taxon>
        <taxon>Fungi</taxon>
        <taxon>Dikarya</taxon>
        <taxon>Ascomycota</taxon>
        <taxon>Taphrinomycotina</taxon>
        <taxon>Schizosaccharomycetes</taxon>
        <taxon>Schizosaccharomycetales</taxon>
        <taxon>Schizosaccharomycetaceae</taxon>
        <taxon>Schizosaccharomyces</taxon>
    </lineage>
</organism>
<keyword id="KW-0002">3D-structure</keyword>
<keyword id="KW-0131">Cell cycle</keyword>
<keyword id="KW-0132">Cell division</keyword>
<keyword id="KW-0158">Chromosome</keyword>
<keyword id="KW-0963">Cytoplasm</keyword>
<keyword id="KW-0903">Direct protein sequencing</keyword>
<keyword id="KW-0226">DNA condensation</keyword>
<keyword id="KW-0227">DNA damage</keyword>
<keyword id="KW-0234">DNA repair</keyword>
<keyword id="KW-0498">Mitosis</keyword>
<keyword id="KW-0539">Nucleus</keyword>
<keyword id="KW-1185">Reference proteome</keyword>
<protein>
    <recommendedName>
        <fullName>Condensin complex subunit 2</fullName>
    </recommendedName>
    <alternativeName>
        <fullName>Barren homolog</fullName>
    </alternativeName>
    <alternativeName>
        <fullName>CAPH homolog</fullName>
    </alternativeName>
    <alternativeName>
        <fullName>p105</fullName>
    </alternativeName>
</protein>
<name>CND2_SCHPO</name>
<accession>Q9Y7R3</accession>
<evidence type="ECO:0000256" key="1">
    <source>
        <dbReference type="SAM" id="MobiDB-lite"/>
    </source>
</evidence>
<evidence type="ECO:0000269" key="2">
    <source>
    </source>
</evidence>
<evidence type="ECO:0000269" key="3">
    <source>
    </source>
</evidence>
<evidence type="ECO:0000305" key="4"/>
<evidence type="ECO:0007829" key="5">
    <source>
        <dbReference type="PDB" id="5OQR"/>
    </source>
</evidence>
<feature type="chain" id="PRO_0000095044" description="Condensin complex subunit 2">
    <location>
        <begin position="1"/>
        <end position="742"/>
    </location>
</feature>
<feature type="region of interest" description="Disordered" evidence="1">
    <location>
        <begin position="1"/>
        <end position="62"/>
    </location>
</feature>
<feature type="region of interest" description="Disordered" evidence="1">
    <location>
        <begin position="151"/>
        <end position="172"/>
    </location>
</feature>
<feature type="region of interest" description="Disordered" evidence="1">
    <location>
        <begin position="452"/>
        <end position="473"/>
    </location>
</feature>
<feature type="region of interest" description="Disordered" evidence="1">
    <location>
        <begin position="564"/>
        <end position="604"/>
    </location>
</feature>
<feature type="compositionally biased region" description="Basic and acidic residues" evidence="1">
    <location>
        <begin position="21"/>
        <end position="39"/>
    </location>
</feature>
<feature type="compositionally biased region" description="Polar residues" evidence="1">
    <location>
        <begin position="53"/>
        <end position="62"/>
    </location>
</feature>
<feature type="compositionally biased region" description="Acidic residues" evidence="1">
    <location>
        <begin position="154"/>
        <end position="165"/>
    </location>
</feature>
<feature type="compositionally biased region" description="Polar residues" evidence="1">
    <location>
        <begin position="452"/>
        <end position="470"/>
    </location>
</feature>
<feature type="compositionally biased region" description="Polar residues" evidence="1">
    <location>
        <begin position="592"/>
        <end position="604"/>
    </location>
</feature>
<feature type="mutagenesis site" description="In cnd2-1; defects in DNA repair and cell cycle.">
    <original>A</original>
    <variation>T</variation>
    <location>
        <position position="114"/>
    </location>
</feature>
<feature type="helix" evidence="5">
    <location>
        <begin position="421"/>
        <end position="425"/>
    </location>
</feature>
<feature type="helix" evidence="5">
    <location>
        <begin position="491"/>
        <end position="495"/>
    </location>
</feature>
<feature type="strand" evidence="5">
    <location>
        <begin position="521"/>
        <end position="523"/>
    </location>
</feature>
<feature type="helix" evidence="5">
    <location>
        <begin position="525"/>
        <end position="527"/>
    </location>
</feature>
<dbReference type="EMBL" id="AB030213">
    <property type="protein sequence ID" value="BAA82625.1"/>
    <property type="molecule type" value="Genomic_DNA"/>
</dbReference>
<dbReference type="EMBL" id="CU329672">
    <property type="protein sequence ID" value="CAB41651.1"/>
    <property type="molecule type" value="Genomic_DNA"/>
</dbReference>
<dbReference type="PIR" id="T43520">
    <property type="entry name" value="T43520"/>
</dbReference>
<dbReference type="RefSeq" id="NP_587811.1">
    <property type="nucleotide sequence ID" value="NM_001022804.2"/>
</dbReference>
<dbReference type="PDB" id="5OQR">
    <property type="method" value="X-ray"/>
    <property type="resolution" value="2.61 A"/>
    <property type="chains" value="C/D=416-544"/>
</dbReference>
<dbReference type="PDBsum" id="5OQR"/>
<dbReference type="SMR" id="Q9Y7R3"/>
<dbReference type="BioGRID" id="275327">
    <property type="interactions" value="30"/>
</dbReference>
<dbReference type="DIP" id="DIP-35026N"/>
<dbReference type="FunCoup" id="Q9Y7R3">
    <property type="interactions" value="657"/>
</dbReference>
<dbReference type="IntAct" id="Q9Y7R3">
    <property type="interactions" value="7"/>
</dbReference>
<dbReference type="STRING" id="284812.Q9Y7R3"/>
<dbReference type="iPTMnet" id="Q9Y7R3"/>
<dbReference type="PaxDb" id="4896-SPCC306.03c.1"/>
<dbReference type="EnsemblFungi" id="SPCC306.03c.1">
    <property type="protein sequence ID" value="SPCC306.03c.1:pep"/>
    <property type="gene ID" value="SPCC306.03c"/>
</dbReference>
<dbReference type="GeneID" id="2538744"/>
<dbReference type="KEGG" id="spo:2538744"/>
<dbReference type="PomBase" id="SPCC306.03c">
    <property type="gene designation" value="cnd2"/>
</dbReference>
<dbReference type="VEuPathDB" id="FungiDB:SPCC306.03c"/>
<dbReference type="eggNOG" id="KOG2328">
    <property type="taxonomic scope" value="Eukaryota"/>
</dbReference>
<dbReference type="HOGENOM" id="CLU_010510_0_1_1"/>
<dbReference type="InParanoid" id="Q9Y7R3"/>
<dbReference type="OMA" id="FRKTCAD"/>
<dbReference type="PhylomeDB" id="Q9Y7R3"/>
<dbReference type="Reactome" id="R-SPO-2514853">
    <property type="pathway name" value="Condensation of Prometaphase Chromosomes"/>
</dbReference>
<dbReference type="PRO" id="PR:Q9Y7R3"/>
<dbReference type="Proteomes" id="UP000002485">
    <property type="component" value="Chromosome III"/>
</dbReference>
<dbReference type="GO" id="GO:0061638">
    <property type="term" value="C:CENP-A containing chromatin"/>
    <property type="evidence" value="ECO:0000314"/>
    <property type="project" value="PomBase"/>
</dbReference>
<dbReference type="GO" id="GO:0000785">
    <property type="term" value="C:chromatin"/>
    <property type="evidence" value="ECO:0000314"/>
    <property type="project" value="PomBase"/>
</dbReference>
<dbReference type="GO" id="GO:0000796">
    <property type="term" value="C:condensin complex"/>
    <property type="evidence" value="ECO:0000314"/>
    <property type="project" value="PomBase"/>
</dbReference>
<dbReference type="GO" id="GO:0005737">
    <property type="term" value="C:cytoplasm"/>
    <property type="evidence" value="ECO:0000314"/>
    <property type="project" value="PomBase"/>
</dbReference>
<dbReference type="GO" id="GO:0005829">
    <property type="term" value="C:cytosol"/>
    <property type="evidence" value="ECO:0007005"/>
    <property type="project" value="PomBase"/>
</dbReference>
<dbReference type="GO" id="GO:0000792">
    <property type="term" value="C:heterochromatin"/>
    <property type="evidence" value="ECO:0000314"/>
    <property type="project" value="PomBase"/>
</dbReference>
<dbReference type="GO" id="GO:0005634">
    <property type="term" value="C:nucleus"/>
    <property type="evidence" value="ECO:0000314"/>
    <property type="project" value="PomBase"/>
</dbReference>
<dbReference type="GO" id="GO:0033553">
    <property type="term" value="C:rDNA heterochromatin"/>
    <property type="evidence" value="ECO:0000314"/>
    <property type="project" value="PomBase"/>
</dbReference>
<dbReference type="GO" id="GO:0003682">
    <property type="term" value="F:chromatin binding"/>
    <property type="evidence" value="ECO:0000318"/>
    <property type="project" value="GO_Central"/>
</dbReference>
<dbReference type="GO" id="GO:0051315">
    <property type="term" value="P:attachment of mitotic spindle microtubules to kinetochore"/>
    <property type="evidence" value="ECO:0000316"/>
    <property type="project" value="PomBase"/>
</dbReference>
<dbReference type="GO" id="GO:0051301">
    <property type="term" value="P:cell division"/>
    <property type="evidence" value="ECO:0007669"/>
    <property type="project" value="UniProtKB-KW"/>
</dbReference>
<dbReference type="GO" id="GO:0006281">
    <property type="term" value="P:DNA repair"/>
    <property type="evidence" value="ECO:0007669"/>
    <property type="project" value="UniProtKB-KW"/>
</dbReference>
<dbReference type="GO" id="GO:0007076">
    <property type="term" value="P:mitotic chromosome condensation"/>
    <property type="evidence" value="ECO:0000315"/>
    <property type="project" value="PomBase"/>
</dbReference>
<dbReference type="InterPro" id="IPR022816">
    <property type="entry name" value="Condensin_barren_su2"/>
</dbReference>
<dbReference type="PANTHER" id="PTHR13108">
    <property type="entry name" value="CONDENSIN COMPLEX SUBUNIT 2"/>
    <property type="match status" value="1"/>
</dbReference>
<dbReference type="PANTHER" id="PTHR13108:SF9">
    <property type="entry name" value="CONDENSIN COMPLEX SUBUNIT 2"/>
    <property type="match status" value="1"/>
</dbReference>
<dbReference type="Pfam" id="PF05786">
    <property type="entry name" value="Cnd2"/>
    <property type="match status" value="1"/>
</dbReference>
<dbReference type="PIRSF" id="PIRSF017126">
    <property type="entry name" value="Condensin_H"/>
    <property type="match status" value="1"/>
</dbReference>
<proteinExistence type="evidence at protein level"/>
<sequence>MKRASLGGHAPVSLPSLNDDALEKKRAKENSRKQRELRRSSALHSITPRRESLNNSSPFNSSHQVPVLSNFEEWIKLATDNKINSTNTWNFALIDYFHDMSLLRDGEDINFQKASCTLDGCVKIYTSRIDSVATETGKLLSGLANDSKVLQQTEEGEDAENDDEDLQKKKERKRAQRSVKTLVKDFESIRAKKFELECSFDPLFKKMCADFDEDGAKGLLMNHLCVDQHGRIVFDSSDTVIKDLENKDVEAESQEAVVAAPIESHDTEMTNVHDNISRETLNGIYKCYFTDIDQLTICPSLQGFEFDSKGNLDVSLLKSLSDEVNMITTTSLVDNTMEKTDADAASLSSDSDGEEGHIVHALEEMAYDEENPYVDVVPKAMDESENPDFGVDTEVNMADGSTMNENYSIISTAAANGVYEYFDKSMKKNWAGPEHWRIQALRKNINNASTVFNSSNTAESSDNVSRSLSSTERKKRRELDNAIDFLQEVDVEALFTPATSSLKLPKSHWKRHNRCLLPDDYQYDSKRLLQLFLKPKMSVLPNADGEGQLQLNKALDDENDLDGIQPHGFDSDGSDNVDEGIPPYGFGDSDSPKQTPLLTPPSSSGFGDNLLLTARLAKPDMLNYAKRAKKVDVRVLKEKLWKCLDLENTIKENSINSHIEGSEMESEETNMPVKSFFSTVNQLEETYEKKELKDISTSFAFICVLHLANEHNLELTSNEDFSDVFIRPGPNLTTLEALENDV</sequence>
<reference key="1">
    <citation type="journal article" date="1999" name="Genes Dev.">
        <title>Fission yeast condensin complex: essential roles of non-SMC subunits for condensation and Cdc2 phosphorylation of Cut3/SMC4.</title>
        <authorList>
            <person name="Sutani T."/>
            <person name="Yuasa T."/>
            <person name="Tomonaga T."/>
            <person name="Dohmae N."/>
            <person name="Takio K."/>
            <person name="Yanagida M."/>
        </authorList>
    </citation>
    <scope>NUCLEOTIDE SEQUENCE [GENOMIC DNA]</scope>
    <scope>PROTEIN SEQUENCE OF 82-113; 123-138; 536-553 AND 674-689</scope>
    <scope>FUNCTION</scope>
    <scope>IDENTIFICATION IN A CONDENSIN COMPLEX WITH CUT3; CUT14; CND1 AND CND3</scope>
</reference>
<reference key="2">
    <citation type="journal article" date="2002" name="Nature">
        <title>The genome sequence of Schizosaccharomyces pombe.</title>
        <authorList>
            <person name="Wood V."/>
            <person name="Gwilliam R."/>
            <person name="Rajandream M.A."/>
            <person name="Lyne M.H."/>
            <person name="Lyne R."/>
            <person name="Stewart A."/>
            <person name="Sgouros J.G."/>
            <person name="Peat N."/>
            <person name="Hayles J."/>
            <person name="Baker S.G."/>
            <person name="Basham D."/>
            <person name="Bowman S."/>
            <person name="Brooks K."/>
            <person name="Brown D."/>
            <person name="Brown S."/>
            <person name="Chillingworth T."/>
            <person name="Churcher C.M."/>
            <person name="Collins M."/>
            <person name="Connor R."/>
            <person name="Cronin A."/>
            <person name="Davis P."/>
            <person name="Feltwell T."/>
            <person name="Fraser A."/>
            <person name="Gentles S."/>
            <person name="Goble A."/>
            <person name="Hamlin N."/>
            <person name="Harris D.E."/>
            <person name="Hidalgo J."/>
            <person name="Hodgson G."/>
            <person name="Holroyd S."/>
            <person name="Hornsby T."/>
            <person name="Howarth S."/>
            <person name="Huckle E.J."/>
            <person name="Hunt S."/>
            <person name="Jagels K."/>
            <person name="James K.D."/>
            <person name="Jones L."/>
            <person name="Jones M."/>
            <person name="Leather S."/>
            <person name="McDonald S."/>
            <person name="McLean J."/>
            <person name="Mooney P."/>
            <person name="Moule S."/>
            <person name="Mungall K.L."/>
            <person name="Murphy L.D."/>
            <person name="Niblett D."/>
            <person name="Odell C."/>
            <person name="Oliver K."/>
            <person name="O'Neil S."/>
            <person name="Pearson D."/>
            <person name="Quail M.A."/>
            <person name="Rabbinowitsch E."/>
            <person name="Rutherford K.M."/>
            <person name="Rutter S."/>
            <person name="Saunders D."/>
            <person name="Seeger K."/>
            <person name="Sharp S."/>
            <person name="Skelton J."/>
            <person name="Simmonds M.N."/>
            <person name="Squares R."/>
            <person name="Squares S."/>
            <person name="Stevens K."/>
            <person name="Taylor K."/>
            <person name="Taylor R.G."/>
            <person name="Tivey A."/>
            <person name="Walsh S.V."/>
            <person name="Warren T."/>
            <person name="Whitehead S."/>
            <person name="Woodward J.R."/>
            <person name="Volckaert G."/>
            <person name="Aert R."/>
            <person name="Robben J."/>
            <person name="Grymonprez B."/>
            <person name="Weltjens I."/>
            <person name="Vanstreels E."/>
            <person name="Rieger M."/>
            <person name="Schaefer M."/>
            <person name="Mueller-Auer S."/>
            <person name="Gabel C."/>
            <person name="Fuchs M."/>
            <person name="Duesterhoeft A."/>
            <person name="Fritzc C."/>
            <person name="Holzer E."/>
            <person name="Moestl D."/>
            <person name="Hilbert H."/>
            <person name="Borzym K."/>
            <person name="Langer I."/>
            <person name="Beck A."/>
            <person name="Lehrach H."/>
            <person name="Reinhardt R."/>
            <person name="Pohl T.M."/>
            <person name="Eger P."/>
            <person name="Zimmermann W."/>
            <person name="Wedler H."/>
            <person name="Wambutt R."/>
            <person name="Purnelle B."/>
            <person name="Goffeau A."/>
            <person name="Cadieu E."/>
            <person name="Dreano S."/>
            <person name="Gloux S."/>
            <person name="Lelaure V."/>
            <person name="Mottier S."/>
            <person name="Galibert F."/>
            <person name="Aves S.J."/>
            <person name="Xiang Z."/>
            <person name="Hunt C."/>
            <person name="Moore K."/>
            <person name="Hurst S.M."/>
            <person name="Lucas M."/>
            <person name="Rochet M."/>
            <person name="Gaillardin C."/>
            <person name="Tallada V.A."/>
            <person name="Garzon A."/>
            <person name="Thode G."/>
            <person name="Daga R.R."/>
            <person name="Cruzado L."/>
            <person name="Jimenez J."/>
            <person name="Sanchez M."/>
            <person name="del Rey F."/>
            <person name="Benito J."/>
            <person name="Dominguez A."/>
            <person name="Revuelta J.L."/>
            <person name="Moreno S."/>
            <person name="Armstrong J."/>
            <person name="Forsburg S.L."/>
            <person name="Cerutti L."/>
            <person name="Lowe T."/>
            <person name="McCombie W.R."/>
            <person name="Paulsen I."/>
            <person name="Potashkin J."/>
            <person name="Shpakovski G.V."/>
            <person name="Ussery D."/>
            <person name="Barrell B.G."/>
            <person name="Nurse P."/>
        </authorList>
    </citation>
    <scope>NUCLEOTIDE SEQUENCE [LARGE SCALE GENOMIC DNA]</scope>
    <source>
        <strain>972 / ATCC 24843</strain>
    </source>
</reference>
<reference key="3">
    <citation type="journal article" date="2002" name="Nature">
        <title>Cnd2 has dual roles in mitotic condensation and interphase.</title>
        <authorList>
            <person name="Aono N."/>
            <person name="Sutani T."/>
            <person name="Tomonaga T."/>
            <person name="Mochida S."/>
            <person name="Yanagida M."/>
        </authorList>
    </citation>
    <scope>FUNCTION</scope>
    <scope>SUBCELLULAR LOCATION</scope>
    <scope>MUTANT CND2-1</scope>
</reference>
<gene>
    <name type="primary">cnd2</name>
    <name type="ORF">SPCC306.03c</name>
</gene>
<comment type="function">
    <text evidence="2 3">Regulatory subunit of the condensin complex, a complex required for conversion of interphase chromatin into mitotic-like condense chromosomes. The condensin complex probably introduces positive supercoils into relaxed DNA in the presence of type I topoisomerases and converts nicked DNA into positive knotted forms in the presence of type II topoisomerases. The condensin complex probably also plays a role during interphase in processes such as DNA repair.</text>
</comment>
<comment type="subunit">
    <text evidence="2">Component of the condensin complex, which contains the cut14/smc2 and cut3/smc2 heterodimer, and three non SMC subunits that probably regulate the complex: cnd1, cnd2 and cnd3.</text>
</comment>
<comment type="interaction">
    <interactant intactId="EBI-1149594">
        <id>Q9Y7R3</id>
    </interactant>
    <interactant intactId="EBI-1149700">
        <id>Q10429</id>
        <label>cnd3</label>
    </interactant>
    <organismsDiffer>false</organismsDiffer>
    <experiments>2</experiments>
</comment>
<comment type="interaction">
    <interactant intactId="EBI-1149594">
        <id>Q9Y7R3</id>
    </interactant>
    <interactant intactId="EBI-1149474">
        <id>P41004</id>
        <label>cut3</label>
    </interactant>
    <organismsDiffer>false</organismsDiffer>
    <experiments>3</experiments>
</comment>
<comment type="interaction">
    <interactant intactId="EBI-1149594">
        <id>Q9Y7R3</id>
    </interactant>
    <interactant intactId="EBI-15929287">
        <id>P04910</id>
        <label>hta2</label>
    </interactant>
    <organismsDiffer>false</organismsDiffer>
    <experiments>2</experiments>
</comment>
<comment type="interaction">
    <interactant intactId="EBI-1149594">
        <id>Q9Y7R3</id>
    </interactant>
    <interactant intactId="EBI-15929575">
        <id>P48003</id>
        <label>pht1</label>
    </interactant>
    <organismsDiffer>false</organismsDiffer>
    <experiments>2</experiments>
</comment>
<comment type="subcellular location">
    <subcellularLocation>
        <location evidence="3">Nucleus</location>
    </subcellularLocation>
    <subcellularLocation>
        <location evidence="3">Cytoplasm</location>
    </subcellularLocation>
    <subcellularLocation>
        <location evidence="3">Chromosome</location>
    </subcellularLocation>
    <text>In interphase cells, the majority of the condensin complex is found in the cytoplasm, while a minority of the complex is associated with chromatin. A subpopulation of the complex however remains associated with chromosome foci in interphase cells. During mitosis, most of the condensin complex is associated with the chromatin. At the onset of prophase, condensin associates with chromosome arms and to chromosome condensation. Dissociation from chromosomes is observed in late telophase.</text>
</comment>
<comment type="similarity">
    <text evidence="4">Belongs to the CND2 (condensin subunit 2) family.</text>
</comment>